<comment type="catalytic activity">
    <reaction evidence="1">
        <text>L-glutamate + acetyl-CoA = N-acetyl-L-glutamate + CoA + H(+)</text>
        <dbReference type="Rhea" id="RHEA:24292"/>
        <dbReference type="ChEBI" id="CHEBI:15378"/>
        <dbReference type="ChEBI" id="CHEBI:29985"/>
        <dbReference type="ChEBI" id="CHEBI:44337"/>
        <dbReference type="ChEBI" id="CHEBI:57287"/>
        <dbReference type="ChEBI" id="CHEBI:57288"/>
        <dbReference type="EC" id="2.3.1.1"/>
    </reaction>
</comment>
<comment type="pathway">
    <text evidence="1">Amino-acid biosynthesis; L-arginine biosynthesis; N(2)-acetyl-L-ornithine from L-glutamate: step 1/4.</text>
</comment>
<comment type="subunit">
    <text evidence="1">Homohexamer.</text>
</comment>
<comment type="subcellular location">
    <subcellularLocation>
        <location evidence="1">Cytoplasm</location>
    </subcellularLocation>
</comment>
<comment type="similarity">
    <text evidence="1">Belongs to the acetyltransferase family. ArgA subfamily.</text>
</comment>
<proteinExistence type="inferred from homology"/>
<evidence type="ECO:0000255" key="1">
    <source>
        <dbReference type="HAMAP-Rule" id="MF_01105"/>
    </source>
</evidence>
<dbReference type="EC" id="2.3.1.1" evidence="1"/>
<dbReference type="EMBL" id="CP000826">
    <property type="protein sequence ID" value="ABV42908.1"/>
    <property type="molecule type" value="Genomic_DNA"/>
</dbReference>
<dbReference type="SMR" id="A8GIG8"/>
<dbReference type="STRING" id="399741.Spro_3812"/>
<dbReference type="KEGG" id="spe:Spro_3812"/>
<dbReference type="eggNOG" id="COG0548">
    <property type="taxonomic scope" value="Bacteria"/>
</dbReference>
<dbReference type="eggNOG" id="COG1246">
    <property type="taxonomic scope" value="Bacteria"/>
</dbReference>
<dbReference type="HOGENOM" id="CLU_024773_0_0_6"/>
<dbReference type="OrthoDB" id="9802238at2"/>
<dbReference type="UniPathway" id="UPA00068">
    <property type="reaction ID" value="UER00106"/>
</dbReference>
<dbReference type="GO" id="GO:0005737">
    <property type="term" value="C:cytoplasm"/>
    <property type="evidence" value="ECO:0007669"/>
    <property type="project" value="UniProtKB-SubCell"/>
</dbReference>
<dbReference type="GO" id="GO:0004042">
    <property type="term" value="F:L-glutamate N-acetyltransferase activity"/>
    <property type="evidence" value="ECO:0007669"/>
    <property type="project" value="UniProtKB-UniRule"/>
</dbReference>
<dbReference type="GO" id="GO:0006526">
    <property type="term" value="P:L-arginine biosynthetic process"/>
    <property type="evidence" value="ECO:0007669"/>
    <property type="project" value="UniProtKB-UniRule"/>
</dbReference>
<dbReference type="CDD" id="cd04237">
    <property type="entry name" value="AAK_NAGS-ABP"/>
    <property type="match status" value="1"/>
</dbReference>
<dbReference type="CDD" id="cd04301">
    <property type="entry name" value="NAT_SF"/>
    <property type="match status" value="1"/>
</dbReference>
<dbReference type="FunFam" id="3.40.1160.10:FF:000005">
    <property type="entry name" value="Amino-acid acetyltransferase"/>
    <property type="match status" value="1"/>
</dbReference>
<dbReference type="FunFam" id="3.40.630.30:FF:000009">
    <property type="entry name" value="Amino-acid acetyltransferase"/>
    <property type="match status" value="1"/>
</dbReference>
<dbReference type="Gene3D" id="3.40.630.30">
    <property type="match status" value="1"/>
</dbReference>
<dbReference type="Gene3D" id="3.40.1160.10">
    <property type="entry name" value="Acetylglutamate kinase-like"/>
    <property type="match status" value="1"/>
</dbReference>
<dbReference type="HAMAP" id="MF_01105">
    <property type="entry name" value="N_acetyl_glu_synth"/>
    <property type="match status" value="1"/>
</dbReference>
<dbReference type="InterPro" id="IPR036393">
    <property type="entry name" value="AceGlu_kinase-like_sf"/>
</dbReference>
<dbReference type="InterPro" id="IPR016181">
    <property type="entry name" value="Acyl_CoA_acyltransferase"/>
</dbReference>
<dbReference type="InterPro" id="IPR001048">
    <property type="entry name" value="Asp/Glu/Uridylate_kinase"/>
</dbReference>
<dbReference type="InterPro" id="IPR000182">
    <property type="entry name" value="GNAT_dom"/>
</dbReference>
<dbReference type="InterPro" id="IPR033719">
    <property type="entry name" value="NAGS_kin"/>
</dbReference>
<dbReference type="InterPro" id="IPR010167">
    <property type="entry name" value="NH2A_AcTrfase"/>
</dbReference>
<dbReference type="NCBIfam" id="TIGR01890">
    <property type="entry name" value="N-Ac-Glu-synth"/>
    <property type="match status" value="1"/>
</dbReference>
<dbReference type="NCBIfam" id="NF003641">
    <property type="entry name" value="PRK05279.1"/>
    <property type="match status" value="1"/>
</dbReference>
<dbReference type="PANTHER" id="PTHR30602">
    <property type="entry name" value="AMINO-ACID ACETYLTRANSFERASE"/>
    <property type="match status" value="1"/>
</dbReference>
<dbReference type="PANTHER" id="PTHR30602:SF12">
    <property type="entry name" value="AMINO-ACID ACETYLTRANSFERASE NAGS1, CHLOROPLASTIC-RELATED"/>
    <property type="match status" value="1"/>
</dbReference>
<dbReference type="Pfam" id="PF00696">
    <property type="entry name" value="AA_kinase"/>
    <property type="match status" value="1"/>
</dbReference>
<dbReference type="Pfam" id="PF00583">
    <property type="entry name" value="Acetyltransf_1"/>
    <property type="match status" value="1"/>
</dbReference>
<dbReference type="PIRSF" id="PIRSF000423">
    <property type="entry name" value="ArgA"/>
    <property type="match status" value="1"/>
</dbReference>
<dbReference type="SUPFAM" id="SSF55729">
    <property type="entry name" value="Acyl-CoA N-acyltransferases (Nat)"/>
    <property type="match status" value="1"/>
</dbReference>
<dbReference type="SUPFAM" id="SSF53633">
    <property type="entry name" value="Carbamate kinase-like"/>
    <property type="match status" value="1"/>
</dbReference>
<dbReference type="PROSITE" id="PS51186">
    <property type="entry name" value="GNAT"/>
    <property type="match status" value="1"/>
</dbReference>
<accession>A8GIG8</accession>
<reference key="1">
    <citation type="submission" date="2007-09" db="EMBL/GenBank/DDBJ databases">
        <title>Complete sequence of chromosome of Serratia proteamaculans 568.</title>
        <authorList>
            <consortium name="US DOE Joint Genome Institute"/>
            <person name="Copeland A."/>
            <person name="Lucas S."/>
            <person name="Lapidus A."/>
            <person name="Barry K."/>
            <person name="Glavina del Rio T."/>
            <person name="Dalin E."/>
            <person name="Tice H."/>
            <person name="Pitluck S."/>
            <person name="Chain P."/>
            <person name="Malfatti S."/>
            <person name="Shin M."/>
            <person name="Vergez L."/>
            <person name="Schmutz J."/>
            <person name="Larimer F."/>
            <person name="Land M."/>
            <person name="Hauser L."/>
            <person name="Kyrpides N."/>
            <person name="Kim E."/>
            <person name="Taghavi S."/>
            <person name="Newman L."/>
            <person name="Vangronsveld J."/>
            <person name="van der Lelie D."/>
            <person name="Richardson P."/>
        </authorList>
    </citation>
    <scope>NUCLEOTIDE SEQUENCE [LARGE SCALE GENOMIC DNA]</scope>
    <source>
        <strain>568</strain>
    </source>
</reference>
<protein>
    <recommendedName>
        <fullName evidence="1">Amino-acid acetyltransferase</fullName>
        <ecNumber evidence="1">2.3.1.1</ecNumber>
    </recommendedName>
    <alternativeName>
        <fullName evidence="1">N-acetylglutamate synthase</fullName>
        <shortName evidence="1">AGS</shortName>
        <shortName evidence="1">NAGS</shortName>
    </alternativeName>
</protein>
<organism>
    <name type="scientific">Serratia proteamaculans (strain 568)</name>
    <dbReference type="NCBI Taxonomy" id="399741"/>
    <lineage>
        <taxon>Bacteria</taxon>
        <taxon>Pseudomonadati</taxon>
        <taxon>Pseudomonadota</taxon>
        <taxon>Gammaproteobacteria</taxon>
        <taxon>Enterobacterales</taxon>
        <taxon>Yersiniaceae</taxon>
        <taxon>Serratia</taxon>
    </lineage>
</organism>
<feature type="chain" id="PRO_1000084823" description="Amino-acid acetyltransferase">
    <location>
        <begin position="1"/>
        <end position="441"/>
    </location>
</feature>
<feature type="domain" description="N-acetyltransferase" evidence="1">
    <location>
        <begin position="295"/>
        <end position="434"/>
    </location>
</feature>
<keyword id="KW-0012">Acyltransferase</keyword>
<keyword id="KW-0028">Amino-acid biosynthesis</keyword>
<keyword id="KW-0055">Arginine biosynthesis</keyword>
<keyword id="KW-0963">Cytoplasm</keyword>
<keyword id="KW-0808">Transferase</keyword>
<gene>
    <name evidence="1" type="primary">argA</name>
    <name type="ordered locus">Spro_3812</name>
</gene>
<sequence>MKERSTELVQGFRHSVPYINAHRGKTFVVMLGGEAIEHENFANIVNDIGLLHSLGIRLVVVYGARPQIDVNLAQHNLEPIYHKHTRVTDAHTLELVKQAAGLLQLDITARLSMSLNNTPLQGAHINVVSGNFIIAQPLGIDDGVDYCHSGRIRRIDEEAIHRQLDSNAIVLIGPVAVSVTGESFNLTSEEVATQLAVKLKAEKMIGFCSSQGVTNQEGTIISELFPNDAQKRIEELEEHGDYHSGTVRFLRGAVKACRSGVRRSHLISYQEDGALVQELFSRDGIGTQIVMESAEQVRRATINDIGGILELIRPLEQQGILVRRSREQLEMEIDKFTIIERDNLTIACAALYPFPEEKIGEMACVAVHPDYRSSSRGEMLLQRVESQARQMGLRKLFVLTTRSIHWFQERGFTPAEVDVLPVEKQALYNYQRRSKILLADL</sequence>
<name>ARGA_SERP5</name>